<proteinExistence type="inferred from homology"/>
<evidence type="ECO:0000255" key="1">
    <source>
        <dbReference type="HAMAP-Rule" id="MF_00621"/>
    </source>
</evidence>
<gene>
    <name evidence="1" type="primary">codY</name>
    <name type="ordered locus">SAK_1687</name>
</gene>
<protein>
    <recommendedName>
        <fullName evidence="1">Global transcriptional regulator CodY</fullName>
    </recommendedName>
</protein>
<organism>
    <name type="scientific">Streptococcus agalactiae serotype Ia (strain ATCC 27591 / A909 / CDC SS700)</name>
    <dbReference type="NCBI Taxonomy" id="205921"/>
    <lineage>
        <taxon>Bacteria</taxon>
        <taxon>Bacillati</taxon>
        <taxon>Bacillota</taxon>
        <taxon>Bacilli</taxon>
        <taxon>Lactobacillales</taxon>
        <taxon>Streptococcaceae</taxon>
        <taxon>Streptococcus</taxon>
    </lineage>
</organism>
<comment type="function">
    <text evidence="1">DNA-binding global transcriptional regulator which is involved in the adaptive response to starvation and acts by directly or indirectly controlling the expression of numerous genes in response to nutrient availability. During rapid exponential growth, CodY is highly active and represses genes whose products allow adaptation to nutrient depletion.</text>
</comment>
<comment type="subcellular location">
    <subcellularLocation>
        <location evidence="1">Cytoplasm</location>
    </subcellularLocation>
</comment>
<comment type="similarity">
    <text evidence="1">Belongs to the CodY family.</text>
</comment>
<keyword id="KW-0963">Cytoplasm</keyword>
<keyword id="KW-0238">DNA-binding</keyword>
<keyword id="KW-0678">Repressor</keyword>
<keyword id="KW-0804">Transcription</keyword>
<keyword id="KW-0805">Transcription regulation</keyword>
<dbReference type="EMBL" id="CP000114">
    <property type="protein sequence ID" value="ABA44633.1"/>
    <property type="molecule type" value="Genomic_DNA"/>
</dbReference>
<dbReference type="RefSeq" id="WP_001133184.1">
    <property type="nucleotide sequence ID" value="NC_007432.1"/>
</dbReference>
<dbReference type="SMR" id="Q3JZL4"/>
<dbReference type="KEGG" id="sak:SAK_1687"/>
<dbReference type="HOGENOM" id="CLU_089581_0_0_9"/>
<dbReference type="GO" id="GO:0005737">
    <property type="term" value="C:cytoplasm"/>
    <property type="evidence" value="ECO:0007669"/>
    <property type="project" value="UniProtKB-SubCell"/>
</dbReference>
<dbReference type="GO" id="GO:0003677">
    <property type="term" value="F:DNA binding"/>
    <property type="evidence" value="ECO:0007669"/>
    <property type="project" value="UniProtKB-UniRule"/>
</dbReference>
<dbReference type="GO" id="GO:0003700">
    <property type="term" value="F:DNA-binding transcription factor activity"/>
    <property type="evidence" value="ECO:0007669"/>
    <property type="project" value="InterPro"/>
</dbReference>
<dbReference type="GO" id="GO:0005525">
    <property type="term" value="F:GTP binding"/>
    <property type="evidence" value="ECO:0007669"/>
    <property type="project" value="InterPro"/>
</dbReference>
<dbReference type="GO" id="GO:0045892">
    <property type="term" value="P:negative regulation of DNA-templated transcription"/>
    <property type="evidence" value="ECO:0007669"/>
    <property type="project" value="UniProtKB-UniRule"/>
</dbReference>
<dbReference type="CDD" id="cd00090">
    <property type="entry name" value="HTH_ARSR"/>
    <property type="match status" value="1"/>
</dbReference>
<dbReference type="FunFam" id="1.10.10.10:FF:000034">
    <property type="entry name" value="GTP-sensing transcriptional pleiotropic repressor CodY"/>
    <property type="match status" value="1"/>
</dbReference>
<dbReference type="FunFam" id="3.30.450.40:FF:000003">
    <property type="entry name" value="GTP-sensing transcriptional pleiotropic repressor CodY"/>
    <property type="match status" value="1"/>
</dbReference>
<dbReference type="Gene3D" id="3.30.450.40">
    <property type="match status" value="1"/>
</dbReference>
<dbReference type="Gene3D" id="1.10.10.10">
    <property type="entry name" value="Winged helix-like DNA-binding domain superfamily/Winged helix DNA-binding domain"/>
    <property type="match status" value="1"/>
</dbReference>
<dbReference type="HAMAP" id="MF_00621">
    <property type="entry name" value="HTH_type_CodY"/>
    <property type="match status" value="1"/>
</dbReference>
<dbReference type="InterPro" id="IPR011991">
    <property type="entry name" value="ArsR-like_HTH"/>
</dbReference>
<dbReference type="InterPro" id="IPR014154">
    <property type="entry name" value="CodY"/>
</dbReference>
<dbReference type="InterPro" id="IPR029016">
    <property type="entry name" value="GAF-like_dom_sf"/>
</dbReference>
<dbReference type="InterPro" id="IPR013198">
    <property type="entry name" value="GTP_trans_reg_CodY_C"/>
</dbReference>
<dbReference type="InterPro" id="IPR010312">
    <property type="entry name" value="Transc_reg_CodY_N"/>
</dbReference>
<dbReference type="InterPro" id="IPR036388">
    <property type="entry name" value="WH-like_DNA-bd_sf"/>
</dbReference>
<dbReference type="InterPro" id="IPR036390">
    <property type="entry name" value="WH_DNA-bd_sf"/>
</dbReference>
<dbReference type="NCBIfam" id="TIGR02787">
    <property type="entry name" value="codY_Gpos"/>
    <property type="match status" value="1"/>
</dbReference>
<dbReference type="NCBIfam" id="NF003170">
    <property type="entry name" value="PRK04158.1"/>
    <property type="match status" value="1"/>
</dbReference>
<dbReference type="PANTHER" id="PTHR40062:SF1">
    <property type="entry name" value="GLOBAL TRANSCRIPTIONAL REGULATOR CODY"/>
    <property type="match status" value="1"/>
</dbReference>
<dbReference type="PANTHER" id="PTHR40062">
    <property type="entry name" value="GTP-SENSING TRANSCRIPTIONAL PLEIOTROPIC REPRESSOR CODY"/>
    <property type="match status" value="1"/>
</dbReference>
<dbReference type="Pfam" id="PF06018">
    <property type="entry name" value="CodY"/>
    <property type="match status" value="1"/>
</dbReference>
<dbReference type="Pfam" id="PF08222">
    <property type="entry name" value="HTH_CodY"/>
    <property type="match status" value="1"/>
</dbReference>
<dbReference type="PIRSF" id="PIRSF011572">
    <property type="entry name" value="GTP_sensing_CodY"/>
    <property type="match status" value="1"/>
</dbReference>
<dbReference type="SUPFAM" id="SSF46785">
    <property type="entry name" value="Winged helix' DNA-binding domain"/>
    <property type="match status" value="1"/>
</dbReference>
<accession>Q3JZL4</accession>
<feature type="chain" id="PRO_1000051547" description="Global transcriptional regulator CodY">
    <location>
        <begin position="1"/>
        <end position="261"/>
    </location>
</feature>
<feature type="DNA-binding region" description="H-T-H motif" evidence="1">
    <location>
        <begin position="207"/>
        <end position="226"/>
    </location>
</feature>
<feature type="region of interest" description="GAF domain" evidence="1">
    <location>
        <begin position="1"/>
        <end position="159"/>
    </location>
</feature>
<name>CODY_STRA1</name>
<reference key="1">
    <citation type="journal article" date="2005" name="Proc. Natl. Acad. Sci. U.S.A.">
        <title>Genome analysis of multiple pathogenic isolates of Streptococcus agalactiae: implications for the microbial 'pan-genome'.</title>
        <authorList>
            <person name="Tettelin H."/>
            <person name="Masignani V."/>
            <person name="Cieslewicz M.J."/>
            <person name="Donati C."/>
            <person name="Medini D."/>
            <person name="Ward N.L."/>
            <person name="Angiuoli S.V."/>
            <person name="Crabtree J."/>
            <person name="Jones A.L."/>
            <person name="Durkin A.S."/>
            <person name="DeBoy R.T."/>
            <person name="Davidsen T.M."/>
            <person name="Mora M."/>
            <person name="Scarselli M."/>
            <person name="Margarit y Ros I."/>
            <person name="Peterson J.D."/>
            <person name="Hauser C.R."/>
            <person name="Sundaram J.P."/>
            <person name="Nelson W.C."/>
            <person name="Madupu R."/>
            <person name="Brinkac L.M."/>
            <person name="Dodson R.J."/>
            <person name="Rosovitz M.J."/>
            <person name="Sullivan S.A."/>
            <person name="Daugherty S.C."/>
            <person name="Haft D.H."/>
            <person name="Selengut J."/>
            <person name="Gwinn M.L."/>
            <person name="Zhou L."/>
            <person name="Zafar N."/>
            <person name="Khouri H."/>
            <person name="Radune D."/>
            <person name="Dimitrov G."/>
            <person name="Watkins K."/>
            <person name="O'Connor K.J."/>
            <person name="Smith S."/>
            <person name="Utterback T.R."/>
            <person name="White O."/>
            <person name="Rubens C.E."/>
            <person name="Grandi G."/>
            <person name="Madoff L.C."/>
            <person name="Kasper D.L."/>
            <person name="Telford J.L."/>
            <person name="Wessels M.R."/>
            <person name="Rappuoli R."/>
            <person name="Fraser C.M."/>
        </authorList>
    </citation>
    <scope>NUCLEOTIDE SEQUENCE [LARGE SCALE GENOMIC DNA]</scope>
    <source>
        <strain>ATCC 27591 / A909 / CDC SS700</strain>
    </source>
</reference>
<sequence length="261" mass="28971">MPNLLEKTRKITSILQRSVDSLDAELPYNTMAAQLADIIDCNACIINGGGNLLGYAMKYKTNTNRVEEFFETKQFPDYYVKSASRVYDTEANLSVDNDLSIFPVETKENFQDGITTIAPIYGGGMRLGTFIIWRNDKEFSDDDLILVEIASTVVGIQLLNLQTENLEENIRKQTAVTMAINTLSYSEMKAVAAILGELDGLEGRLTASVIADRIGITRSVIVNALRKLESAGIIESRSLGMKGTYLKVINEGIFDKLKEYN</sequence>